<keyword id="KW-0002">3D-structure</keyword>
<keyword id="KW-1015">Disulfide bond</keyword>
<keyword id="KW-0960">Knottin</keyword>
<keyword id="KW-0964">Secreted</keyword>
<keyword id="KW-0732">Signal</keyword>
<comment type="subcellular location">
    <subcellularLocation>
        <location evidence="5">Secreted</location>
    </subcellularLocation>
</comment>
<comment type="tissue specificity">
    <text evidence="5">Expressed by the venom gland.</text>
</comment>
<comment type="domain">
    <text evidence="4">The presence of a 'disulfide through disulfide knot' structurally defines this protein as a knottin.</text>
</comment>
<comment type="similarity">
    <text evidence="4">Belongs to the neurotoxin 33 family.</text>
</comment>
<dbReference type="EMBL" id="AY681339">
    <property type="protein sequence ID" value="AAU87899.1"/>
    <property type="molecule type" value="mRNA"/>
</dbReference>
<dbReference type="PDB" id="2N6N">
    <property type="method" value="NMR"/>
    <property type="chains" value="A=37-68"/>
</dbReference>
<dbReference type="PDBsum" id="2N6N"/>
<dbReference type="BMRB" id="Q5Y4U5"/>
<dbReference type="SMR" id="Q5Y4U5"/>
<dbReference type="ArachnoServer" id="AS000073">
    <property type="toxin name" value="U4-agatoxin-Ao1a"/>
</dbReference>
<dbReference type="GO" id="GO:0005576">
    <property type="term" value="C:extracellular region"/>
    <property type="evidence" value="ECO:0007669"/>
    <property type="project" value="UniProtKB-SubCell"/>
</dbReference>
<dbReference type="GO" id="GO:0008200">
    <property type="term" value="F:ion channel inhibitor activity"/>
    <property type="evidence" value="ECO:0007669"/>
    <property type="project" value="InterPro"/>
</dbReference>
<dbReference type="CDD" id="cd12960">
    <property type="entry name" value="Spider_toxin"/>
    <property type="match status" value="1"/>
</dbReference>
<dbReference type="InterPro" id="IPR004169">
    <property type="entry name" value="Spidertoxin"/>
</dbReference>
<proteinExistence type="evidence at protein level"/>
<organism>
    <name type="scientific">Agelena orientalis</name>
    <name type="common">Funnel-web spider</name>
    <dbReference type="NCBI Taxonomy" id="293813"/>
    <lineage>
        <taxon>Eukaryota</taxon>
        <taxon>Metazoa</taxon>
        <taxon>Ecdysozoa</taxon>
        <taxon>Arthropoda</taxon>
        <taxon>Chelicerata</taxon>
        <taxon>Arachnida</taxon>
        <taxon>Araneae</taxon>
        <taxon>Araneomorphae</taxon>
        <taxon>Entelegynae</taxon>
        <taxon>Agelenidae</taxon>
        <taxon>Agelena</taxon>
    </lineage>
</organism>
<name>TXAG4_AGEOR</name>
<evidence type="ECO:0000255" key="1"/>
<evidence type="ECO:0000269" key="2">
    <source>
    </source>
</evidence>
<evidence type="ECO:0000303" key="3">
    <source>
    </source>
</evidence>
<evidence type="ECO:0000305" key="4"/>
<evidence type="ECO:0000305" key="5">
    <source>
    </source>
</evidence>
<evidence type="ECO:0000312" key="6">
    <source>
        <dbReference type="EMBL" id="AAU87899.1"/>
    </source>
</evidence>
<evidence type="ECO:0007744" key="7">
    <source>
        <dbReference type="PDB" id="2N6N"/>
    </source>
</evidence>
<evidence type="ECO:0007829" key="8">
    <source>
        <dbReference type="PDB" id="2N6N"/>
    </source>
</evidence>
<sequence>MKKSTVIVLSLAAFVLLSVMQFSAAEDIKMEVEEQRGYCAEKGIKCHNIHCCSGLTCKCKGSSCVCRK</sequence>
<reference key="1">
    <citation type="journal article" date="2005" name="Proteins">
        <title>A novel strategy for the identification of toxinlike structures in spider venom.</title>
        <authorList>
            <person name="Kozlov S.A."/>
            <person name="Malyavka A."/>
            <person name="McCutchen B."/>
            <person name="Lu A."/>
            <person name="Schepers E."/>
            <person name="Herrmann R."/>
            <person name="Grishin E.V."/>
        </authorList>
    </citation>
    <scope>NUCLEOTIDE SEQUENCE [MRNA]</scope>
    <source>
        <tissue>Venom gland</tissue>
    </source>
</reference>
<reference key="2">
    <citation type="journal article" date="2020" name="Proc. Natl. Acad. Sci. U.S.A.">
        <title>Structural venomics reveals evolution of a complex venom by duplication and diversification of an ancient peptide-encoding gene.</title>
        <authorList>
            <person name="Pineda S.S."/>
            <person name="Chin Y.K."/>
            <person name="Undheim E.A.B."/>
            <person name="Senff S."/>
            <person name="Mobli M."/>
            <person name="Dauly C."/>
            <person name="Escoubas P."/>
            <person name="Nicholson G.M."/>
            <person name="Kaas Q."/>
            <person name="Guo S."/>
            <person name="Herzig V."/>
            <person name="Mattick J.S."/>
            <person name="King G.F."/>
        </authorList>
    </citation>
    <scope>STRUCTURE BY NMR OF 24-98</scope>
    <scope>DISULFIDE BONDS</scope>
    <scope>RECOMBINANT EXPRESSION</scope>
</reference>
<accession>Q5Y4U5</accession>
<feature type="signal peptide" evidence="1">
    <location>
        <begin position="1"/>
        <end position="25"/>
    </location>
</feature>
<feature type="propeptide" id="PRO_5000093681" evidence="1">
    <location>
        <begin position="26"/>
        <end position="36"/>
    </location>
</feature>
<feature type="chain" id="PRO_5000093682" description="U4-agatoxin-Ao1a" evidence="5">
    <location>
        <begin position="37"/>
        <end position="68"/>
    </location>
</feature>
<feature type="disulfide bond" evidence="2 7">
    <location>
        <begin position="39"/>
        <end position="52"/>
    </location>
</feature>
<feature type="disulfide bond" evidence="2 7">
    <location>
        <begin position="46"/>
        <end position="57"/>
    </location>
</feature>
<feature type="disulfide bond" evidence="2 7">
    <location>
        <begin position="51"/>
        <end position="66"/>
    </location>
</feature>
<feature type="disulfide bond" evidence="2 7">
    <location>
        <begin position="59"/>
        <end position="64"/>
    </location>
</feature>
<feature type="strand" evidence="8">
    <location>
        <begin position="56"/>
        <end position="58"/>
    </location>
</feature>
<feature type="strand" evidence="8">
    <location>
        <begin position="65"/>
        <end position="67"/>
    </location>
</feature>
<protein>
    <recommendedName>
        <fullName evidence="4">U4-agatoxin-Ao1a</fullName>
        <shortName evidence="4">U4-AGTX-Ao1a</shortName>
    </recommendedName>
    <alternativeName>
        <fullName evidence="3 6">Mu-2Aaga_15</fullName>
    </alternativeName>
</protein>